<dbReference type="EC" id="2.4.99.28" evidence="1"/>
<dbReference type="EMBL" id="AL513382">
    <property type="protein sequence ID" value="CAD07843.1"/>
    <property type="molecule type" value="Genomic_DNA"/>
</dbReference>
<dbReference type="EMBL" id="AE014613">
    <property type="protein sequence ID" value="AAO70779.1"/>
    <property type="molecule type" value="Genomic_DNA"/>
</dbReference>
<dbReference type="RefSeq" id="NP_457705.1">
    <property type="nucleotide sequence ID" value="NC_003198.1"/>
</dbReference>
<dbReference type="RefSeq" id="WP_000044653.1">
    <property type="nucleotide sequence ID" value="NZ_WSUR01000003.1"/>
</dbReference>
<dbReference type="SMR" id="Q8Z3G0"/>
<dbReference type="STRING" id="220341.gene:17587356"/>
<dbReference type="KEGG" id="stt:t3243"/>
<dbReference type="KEGG" id="sty:STY3505"/>
<dbReference type="PATRIC" id="fig|220341.7.peg.3569"/>
<dbReference type="eggNOG" id="COG0744">
    <property type="taxonomic scope" value="Bacteria"/>
</dbReference>
<dbReference type="HOGENOM" id="CLU_006354_1_1_6"/>
<dbReference type="OMA" id="PAPKCFD"/>
<dbReference type="OrthoDB" id="9766909at2"/>
<dbReference type="UniPathway" id="UPA00219"/>
<dbReference type="Proteomes" id="UP000000541">
    <property type="component" value="Chromosome"/>
</dbReference>
<dbReference type="Proteomes" id="UP000002670">
    <property type="component" value="Chromosome"/>
</dbReference>
<dbReference type="GO" id="GO:0009274">
    <property type="term" value="C:peptidoglycan-based cell wall"/>
    <property type="evidence" value="ECO:0007669"/>
    <property type="project" value="InterPro"/>
</dbReference>
<dbReference type="GO" id="GO:0005886">
    <property type="term" value="C:plasma membrane"/>
    <property type="evidence" value="ECO:0007669"/>
    <property type="project" value="UniProtKB-SubCell"/>
</dbReference>
<dbReference type="GO" id="GO:0016763">
    <property type="term" value="F:pentosyltransferase activity"/>
    <property type="evidence" value="ECO:0007669"/>
    <property type="project" value="InterPro"/>
</dbReference>
<dbReference type="GO" id="GO:0008955">
    <property type="term" value="F:peptidoglycan glycosyltransferase activity"/>
    <property type="evidence" value="ECO:0007669"/>
    <property type="project" value="UniProtKB-UniRule"/>
</dbReference>
<dbReference type="GO" id="GO:0071555">
    <property type="term" value="P:cell wall organization"/>
    <property type="evidence" value="ECO:0007669"/>
    <property type="project" value="UniProtKB-KW"/>
</dbReference>
<dbReference type="GO" id="GO:0009252">
    <property type="term" value="P:peptidoglycan biosynthetic process"/>
    <property type="evidence" value="ECO:0007669"/>
    <property type="project" value="UniProtKB-UniRule"/>
</dbReference>
<dbReference type="GO" id="GO:0008360">
    <property type="term" value="P:regulation of cell shape"/>
    <property type="evidence" value="ECO:0007669"/>
    <property type="project" value="UniProtKB-KW"/>
</dbReference>
<dbReference type="Gene3D" id="1.10.3810.10">
    <property type="entry name" value="Biosynthetic peptidoglycan transglycosylase-like"/>
    <property type="match status" value="1"/>
</dbReference>
<dbReference type="HAMAP" id="MF_00766">
    <property type="entry name" value="PGT_MtgA"/>
    <property type="match status" value="1"/>
</dbReference>
<dbReference type="InterPro" id="IPR001264">
    <property type="entry name" value="Glyco_trans_51"/>
</dbReference>
<dbReference type="InterPro" id="IPR023346">
    <property type="entry name" value="Lysozyme-like_dom_sf"/>
</dbReference>
<dbReference type="InterPro" id="IPR036950">
    <property type="entry name" value="PBP_transglycosylase"/>
</dbReference>
<dbReference type="InterPro" id="IPR011812">
    <property type="entry name" value="Pep_trsgly"/>
</dbReference>
<dbReference type="NCBIfam" id="TIGR02070">
    <property type="entry name" value="mono_pep_trsgly"/>
    <property type="match status" value="1"/>
</dbReference>
<dbReference type="PANTHER" id="PTHR30400:SF0">
    <property type="entry name" value="BIOSYNTHETIC PEPTIDOGLYCAN TRANSGLYCOSYLASE"/>
    <property type="match status" value="1"/>
</dbReference>
<dbReference type="PANTHER" id="PTHR30400">
    <property type="entry name" value="MONOFUNCTIONAL BIOSYNTHETIC PEPTIDOGLYCAN TRANSGLYCOSYLASE"/>
    <property type="match status" value="1"/>
</dbReference>
<dbReference type="Pfam" id="PF00912">
    <property type="entry name" value="Transgly"/>
    <property type="match status" value="1"/>
</dbReference>
<dbReference type="SUPFAM" id="SSF53955">
    <property type="entry name" value="Lysozyme-like"/>
    <property type="match status" value="1"/>
</dbReference>
<evidence type="ECO:0000255" key="1">
    <source>
        <dbReference type="HAMAP-Rule" id="MF_00766"/>
    </source>
</evidence>
<proteinExistence type="inferred from homology"/>
<reference key="1">
    <citation type="journal article" date="2001" name="Nature">
        <title>Complete genome sequence of a multiple drug resistant Salmonella enterica serovar Typhi CT18.</title>
        <authorList>
            <person name="Parkhill J."/>
            <person name="Dougan G."/>
            <person name="James K.D."/>
            <person name="Thomson N.R."/>
            <person name="Pickard D."/>
            <person name="Wain J."/>
            <person name="Churcher C.M."/>
            <person name="Mungall K.L."/>
            <person name="Bentley S.D."/>
            <person name="Holden M.T.G."/>
            <person name="Sebaihia M."/>
            <person name="Baker S."/>
            <person name="Basham D."/>
            <person name="Brooks K."/>
            <person name="Chillingworth T."/>
            <person name="Connerton P."/>
            <person name="Cronin A."/>
            <person name="Davis P."/>
            <person name="Davies R.M."/>
            <person name="Dowd L."/>
            <person name="White N."/>
            <person name="Farrar J."/>
            <person name="Feltwell T."/>
            <person name="Hamlin N."/>
            <person name="Haque A."/>
            <person name="Hien T.T."/>
            <person name="Holroyd S."/>
            <person name="Jagels K."/>
            <person name="Krogh A."/>
            <person name="Larsen T.S."/>
            <person name="Leather S."/>
            <person name="Moule S."/>
            <person name="O'Gaora P."/>
            <person name="Parry C."/>
            <person name="Quail M.A."/>
            <person name="Rutherford K.M."/>
            <person name="Simmonds M."/>
            <person name="Skelton J."/>
            <person name="Stevens K."/>
            <person name="Whitehead S."/>
            <person name="Barrell B.G."/>
        </authorList>
    </citation>
    <scope>NUCLEOTIDE SEQUENCE [LARGE SCALE GENOMIC DNA]</scope>
    <source>
        <strain>CT18</strain>
    </source>
</reference>
<reference key="2">
    <citation type="journal article" date="2003" name="J. Bacteriol.">
        <title>Comparative genomics of Salmonella enterica serovar Typhi strains Ty2 and CT18.</title>
        <authorList>
            <person name="Deng W."/>
            <person name="Liou S.-R."/>
            <person name="Plunkett G. III"/>
            <person name="Mayhew G.F."/>
            <person name="Rose D.J."/>
            <person name="Burland V."/>
            <person name="Kodoyianni V."/>
            <person name="Schwartz D.C."/>
            <person name="Blattner F.R."/>
        </authorList>
    </citation>
    <scope>NUCLEOTIDE SEQUENCE [LARGE SCALE GENOMIC DNA]</scope>
    <source>
        <strain>ATCC 700931 / Ty2</strain>
    </source>
</reference>
<protein>
    <recommendedName>
        <fullName evidence="1">Biosynthetic peptidoglycan transglycosylase</fullName>
        <ecNumber evidence="1">2.4.99.28</ecNumber>
    </recommendedName>
    <alternativeName>
        <fullName evidence="1">Glycan polymerase</fullName>
    </alternativeName>
    <alternativeName>
        <fullName evidence="1">Peptidoglycan glycosyltransferase MtgA</fullName>
        <shortName evidence="1">PGT</shortName>
    </alternativeName>
</protein>
<keyword id="KW-0997">Cell inner membrane</keyword>
<keyword id="KW-1003">Cell membrane</keyword>
<keyword id="KW-0133">Cell shape</keyword>
<keyword id="KW-0961">Cell wall biogenesis/degradation</keyword>
<keyword id="KW-0328">Glycosyltransferase</keyword>
<keyword id="KW-0472">Membrane</keyword>
<keyword id="KW-0573">Peptidoglycan synthesis</keyword>
<keyword id="KW-0808">Transferase</keyword>
<keyword id="KW-0812">Transmembrane</keyword>
<keyword id="KW-1133">Transmembrane helix</keyword>
<organism>
    <name type="scientific">Salmonella typhi</name>
    <dbReference type="NCBI Taxonomy" id="90370"/>
    <lineage>
        <taxon>Bacteria</taxon>
        <taxon>Pseudomonadati</taxon>
        <taxon>Pseudomonadota</taxon>
        <taxon>Gammaproteobacteria</taxon>
        <taxon>Enterobacterales</taxon>
        <taxon>Enterobacteriaceae</taxon>
        <taxon>Salmonella</taxon>
    </lineage>
</organism>
<sequence length="242" mass="26988">MSKRRIAPLTFLRRLLLRILAALAVFWGGGIALFSVVPVPFSAVMAERQISAWLGGEFGYVAHSDWVSMADISPWMGLAVIAAEDQKFPEHWGFDVPAIEKALAHNERNESRIRGASTLSQQTAKNLFLWDGRSWVRKGLEAGLTLGIETVWSKKRILTVYLNIAEFGDGIFGVEAAAQRYFHKPASRLSVSEAALLAAVLPNPLRYKANAPSGYVRSRQAWIMRQMRQLGGESFMTRNQLN</sequence>
<name>MTGA_SALTI</name>
<comment type="function">
    <text evidence="1">Peptidoglycan polymerase that catalyzes glycan chain elongation from lipid-linked precursors.</text>
</comment>
<comment type="catalytic activity">
    <reaction evidence="1">
        <text>[GlcNAc-(1-&gt;4)-Mur2Ac(oyl-L-Ala-gamma-D-Glu-L-Lys-D-Ala-D-Ala)](n)-di-trans,octa-cis-undecaprenyl diphosphate + beta-D-GlcNAc-(1-&gt;4)-Mur2Ac(oyl-L-Ala-gamma-D-Glu-L-Lys-D-Ala-D-Ala)-di-trans,octa-cis-undecaprenyl diphosphate = [GlcNAc-(1-&gt;4)-Mur2Ac(oyl-L-Ala-gamma-D-Glu-L-Lys-D-Ala-D-Ala)](n+1)-di-trans,octa-cis-undecaprenyl diphosphate + di-trans,octa-cis-undecaprenyl diphosphate + H(+)</text>
        <dbReference type="Rhea" id="RHEA:23708"/>
        <dbReference type="Rhea" id="RHEA-COMP:9602"/>
        <dbReference type="Rhea" id="RHEA-COMP:9603"/>
        <dbReference type="ChEBI" id="CHEBI:15378"/>
        <dbReference type="ChEBI" id="CHEBI:58405"/>
        <dbReference type="ChEBI" id="CHEBI:60033"/>
        <dbReference type="ChEBI" id="CHEBI:78435"/>
        <dbReference type="EC" id="2.4.99.28"/>
    </reaction>
</comment>
<comment type="pathway">
    <text evidence="1">Cell wall biogenesis; peptidoglycan biosynthesis.</text>
</comment>
<comment type="subcellular location">
    <subcellularLocation>
        <location evidence="1">Cell inner membrane</location>
        <topology evidence="1">Single-pass membrane protein</topology>
    </subcellularLocation>
</comment>
<comment type="similarity">
    <text evidence="1">Belongs to the glycosyltransferase 51 family.</text>
</comment>
<feature type="chain" id="PRO_0000083143" description="Biosynthetic peptidoglycan transglycosylase">
    <location>
        <begin position="1"/>
        <end position="242"/>
    </location>
</feature>
<feature type="transmembrane region" description="Helical" evidence="1">
    <location>
        <begin position="19"/>
        <end position="39"/>
    </location>
</feature>
<gene>
    <name evidence="1" type="primary">mtgA</name>
    <name type="ordered locus">STY3505</name>
    <name type="ordered locus">t3243</name>
</gene>
<accession>Q8Z3G0</accession>